<sequence>MNITVLTLFPEMFTALNHSIVARAQEEKRIELNYVNFRDYSTNRHGRVDDSPYGGGAGMLLMPQPIFDAIADLPEAKRRIIALTPTGRRFDQRLAEEWSKETDLVFLCGHYEGFDQRVHDELVTDEVSLGDFVLTGGELAAMTMIDATVRLLPDVLGKAASHEDDSFSTGLLEYPHYTRPADFRGLTVPEVLLSGNHARIETWRREQALRRTLERRPDLLETADLSETDRRYLQSISGLSND</sequence>
<name>TRMD_EXIS2</name>
<dbReference type="EC" id="2.1.1.228" evidence="1"/>
<dbReference type="EMBL" id="CP001022">
    <property type="protein sequence ID" value="ACB61350.1"/>
    <property type="molecule type" value="Genomic_DNA"/>
</dbReference>
<dbReference type="RefSeq" id="WP_012370768.1">
    <property type="nucleotide sequence ID" value="NC_010556.1"/>
</dbReference>
<dbReference type="SMR" id="B1YIM4"/>
<dbReference type="STRING" id="262543.Exig_1898"/>
<dbReference type="KEGG" id="esi:Exig_1898"/>
<dbReference type="eggNOG" id="COG0336">
    <property type="taxonomic scope" value="Bacteria"/>
</dbReference>
<dbReference type="HOGENOM" id="CLU_047363_0_1_9"/>
<dbReference type="OrthoDB" id="9807416at2"/>
<dbReference type="Proteomes" id="UP000001681">
    <property type="component" value="Chromosome"/>
</dbReference>
<dbReference type="GO" id="GO:0005829">
    <property type="term" value="C:cytosol"/>
    <property type="evidence" value="ECO:0007669"/>
    <property type="project" value="TreeGrafter"/>
</dbReference>
<dbReference type="GO" id="GO:0052906">
    <property type="term" value="F:tRNA (guanine(37)-N1)-methyltransferase activity"/>
    <property type="evidence" value="ECO:0007669"/>
    <property type="project" value="UniProtKB-UniRule"/>
</dbReference>
<dbReference type="GO" id="GO:0002939">
    <property type="term" value="P:tRNA N1-guanine methylation"/>
    <property type="evidence" value="ECO:0007669"/>
    <property type="project" value="TreeGrafter"/>
</dbReference>
<dbReference type="CDD" id="cd18080">
    <property type="entry name" value="TrmD-like"/>
    <property type="match status" value="1"/>
</dbReference>
<dbReference type="FunFam" id="1.10.1270.20:FF:000001">
    <property type="entry name" value="tRNA (guanine-N(1)-)-methyltransferase"/>
    <property type="match status" value="1"/>
</dbReference>
<dbReference type="FunFam" id="3.40.1280.10:FF:000001">
    <property type="entry name" value="tRNA (guanine-N(1)-)-methyltransferase"/>
    <property type="match status" value="1"/>
</dbReference>
<dbReference type="Gene3D" id="3.40.1280.10">
    <property type="match status" value="1"/>
</dbReference>
<dbReference type="Gene3D" id="1.10.1270.20">
    <property type="entry name" value="tRNA(m1g37)methyltransferase, domain 2"/>
    <property type="match status" value="1"/>
</dbReference>
<dbReference type="HAMAP" id="MF_00605">
    <property type="entry name" value="TrmD"/>
    <property type="match status" value="1"/>
</dbReference>
<dbReference type="InterPro" id="IPR029028">
    <property type="entry name" value="Alpha/beta_knot_MTases"/>
</dbReference>
<dbReference type="InterPro" id="IPR023148">
    <property type="entry name" value="tRNA_m1G_MeTrfase_C_sf"/>
</dbReference>
<dbReference type="InterPro" id="IPR002649">
    <property type="entry name" value="tRNA_m1G_MeTrfase_TrmD"/>
</dbReference>
<dbReference type="InterPro" id="IPR029026">
    <property type="entry name" value="tRNA_m1G_MTases_N"/>
</dbReference>
<dbReference type="InterPro" id="IPR016009">
    <property type="entry name" value="tRNA_MeTrfase_TRMD/TRM10"/>
</dbReference>
<dbReference type="NCBIfam" id="NF000648">
    <property type="entry name" value="PRK00026.1"/>
    <property type="match status" value="1"/>
</dbReference>
<dbReference type="NCBIfam" id="TIGR00088">
    <property type="entry name" value="trmD"/>
    <property type="match status" value="1"/>
</dbReference>
<dbReference type="PANTHER" id="PTHR46417">
    <property type="entry name" value="TRNA (GUANINE-N(1)-)-METHYLTRANSFERASE"/>
    <property type="match status" value="1"/>
</dbReference>
<dbReference type="PANTHER" id="PTHR46417:SF1">
    <property type="entry name" value="TRNA (GUANINE-N(1)-)-METHYLTRANSFERASE"/>
    <property type="match status" value="1"/>
</dbReference>
<dbReference type="Pfam" id="PF01746">
    <property type="entry name" value="tRNA_m1G_MT"/>
    <property type="match status" value="1"/>
</dbReference>
<dbReference type="PIRSF" id="PIRSF000386">
    <property type="entry name" value="tRNA_mtase"/>
    <property type="match status" value="1"/>
</dbReference>
<dbReference type="SUPFAM" id="SSF75217">
    <property type="entry name" value="alpha/beta knot"/>
    <property type="match status" value="1"/>
</dbReference>
<comment type="function">
    <text evidence="1">Specifically methylates guanosine-37 in various tRNAs.</text>
</comment>
<comment type="catalytic activity">
    <reaction evidence="1">
        <text>guanosine(37) in tRNA + S-adenosyl-L-methionine = N(1)-methylguanosine(37) in tRNA + S-adenosyl-L-homocysteine + H(+)</text>
        <dbReference type="Rhea" id="RHEA:36899"/>
        <dbReference type="Rhea" id="RHEA-COMP:10145"/>
        <dbReference type="Rhea" id="RHEA-COMP:10147"/>
        <dbReference type="ChEBI" id="CHEBI:15378"/>
        <dbReference type="ChEBI" id="CHEBI:57856"/>
        <dbReference type="ChEBI" id="CHEBI:59789"/>
        <dbReference type="ChEBI" id="CHEBI:73542"/>
        <dbReference type="ChEBI" id="CHEBI:74269"/>
        <dbReference type="EC" id="2.1.1.228"/>
    </reaction>
</comment>
<comment type="subunit">
    <text evidence="1">Homodimer.</text>
</comment>
<comment type="subcellular location">
    <subcellularLocation>
        <location evidence="1">Cytoplasm</location>
    </subcellularLocation>
</comment>
<comment type="similarity">
    <text evidence="1">Belongs to the RNA methyltransferase TrmD family.</text>
</comment>
<protein>
    <recommendedName>
        <fullName evidence="1">tRNA (guanine-N(1)-)-methyltransferase</fullName>
        <ecNumber evidence="1">2.1.1.228</ecNumber>
    </recommendedName>
    <alternativeName>
        <fullName evidence="1">M1G-methyltransferase</fullName>
    </alternativeName>
    <alternativeName>
        <fullName evidence="1">tRNA [GM37] methyltransferase</fullName>
    </alternativeName>
</protein>
<reference key="1">
    <citation type="submission" date="2008-04" db="EMBL/GenBank/DDBJ databases">
        <title>Complete sequence of chromosome of Exiguobacterium sibiricum 255-15.</title>
        <authorList>
            <consortium name="US DOE Joint Genome Institute"/>
            <person name="Copeland A."/>
            <person name="Lucas S."/>
            <person name="Lapidus A."/>
            <person name="Glavina del Rio T."/>
            <person name="Dalin E."/>
            <person name="Tice H."/>
            <person name="Bruce D."/>
            <person name="Goodwin L."/>
            <person name="Pitluck S."/>
            <person name="Kiss H."/>
            <person name="Chertkov O."/>
            <person name="Monk C."/>
            <person name="Brettin T."/>
            <person name="Detter J.C."/>
            <person name="Han C."/>
            <person name="Kuske C.R."/>
            <person name="Schmutz J."/>
            <person name="Larimer F."/>
            <person name="Land M."/>
            <person name="Hauser L."/>
            <person name="Kyrpides N."/>
            <person name="Mikhailova N."/>
            <person name="Vishnivetskaya T."/>
            <person name="Rodrigues D.F."/>
            <person name="Gilichinsky D."/>
            <person name="Tiedje J."/>
            <person name="Richardson P."/>
        </authorList>
    </citation>
    <scope>NUCLEOTIDE SEQUENCE [LARGE SCALE GENOMIC DNA]</scope>
    <source>
        <strain>DSM 17290 / CCUG 55495 / CIP 109462 / JCM 13490 / 255-15</strain>
    </source>
</reference>
<accession>B1YIM4</accession>
<keyword id="KW-0963">Cytoplasm</keyword>
<keyword id="KW-0489">Methyltransferase</keyword>
<keyword id="KW-1185">Reference proteome</keyword>
<keyword id="KW-0949">S-adenosyl-L-methionine</keyword>
<keyword id="KW-0808">Transferase</keyword>
<keyword id="KW-0819">tRNA processing</keyword>
<proteinExistence type="inferred from homology"/>
<organism>
    <name type="scientific">Exiguobacterium sibiricum (strain DSM 17290 / CCUG 55495 / CIP 109462 / JCM 13490 / 255-15)</name>
    <dbReference type="NCBI Taxonomy" id="262543"/>
    <lineage>
        <taxon>Bacteria</taxon>
        <taxon>Bacillati</taxon>
        <taxon>Bacillota</taxon>
        <taxon>Bacilli</taxon>
        <taxon>Bacillales</taxon>
        <taxon>Bacillales Family XII. Incertae Sedis</taxon>
        <taxon>Exiguobacterium</taxon>
    </lineage>
</organism>
<feature type="chain" id="PRO_1000130172" description="tRNA (guanine-N(1)-)-methyltransferase">
    <location>
        <begin position="1"/>
        <end position="242"/>
    </location>
</feature>
<feature type="binding site" evidence="1">
    <location>
        <position position="109"/>
    </location>
    <ligand>
        <name>S-adenosyl-L-methionine</name>
        <dbReference type="ChEBI" id="CHEBI:59789"/>
    </ligand>
</feature>
<feature type="binding site" evidence="1">
    <location>
        <begin position="129"/>
        <end position="134"/>
    </location>
    <ligand>
        <name>S-adenosyl-L-methionine</name>
        <dbReference type="ChEBI" id="CHEBI:59789"/>
    </ligand>
</feature>
<evidence type="ECO:0000255" key="1">
    <source>
        <dbReference type="HAMAP-Rule" id="MF_00605"/>
    </source>
</evidence>
<gene>
    <name evidence="1" type="primary">trmD</name>
    <name type="ordered locus">Exig_1898</name>
</gene>